<evidence type="ECO:0000269" key="1">
    <source>
    </source>
</evidence>
<evidence type="ECO:0000305" key="2"/>
<evidence type="ECO:0000305" key="3">
    <source>
    </source>
</evidence>
<comment type="subcellular location">
    <subcellularLocation>
        <location evidence="1">Secreted</location>
    </subcellularLocation>
</comment>
<comment type="tissue specificity">
    <text evidence="3">Expressed by the venom duct.</text>
</comment>
<comment type="domain">
    <text evidence="2">The cysteine framework is V (CC-CC).</text>
</comment>
<comment type="PTM">
    <text evidence="2">Contains 2 disulfide bonds that can be either 'C1-C3, C2-C4' or 'C1-C4, C2-C3', since these disulfide connectivities have been observed for conotoxins with cysteine framework V (for examples, see AC P0DQQ7 and AC P81755).</text>
</comment>
<comment type="similarity">
    <text evidence="2">Belongs to the conotoxin T superfamily.</text>
</comment>
<organism>
    <name type="scientific">Conus textile</name>
    <name type="common">Cloth-of-gold cone</name>
    <dbReference type="NCBI Taxonomy" id="6494"/>
    <lineage>
        <taxon>Eukaryota</taxon>
        <taxon>Metazoa</taxon>
        <taxon>Spiralia</taxon>
        <taxon>Lophotrochozoa</taxon>
        <taxon>Mollusca</taxon>
        <taxon>Gastropoda</taxon>
        <taxon>Caenogastropoda</taxon>
        <taxon>Neogastropoda</taxon>
        <taxon>Conoidea</taxon>
        <taxon>Conidae</taxon>
        <taxon>Conus</taxon>
        <taxon>Cylinder</taxon>
    </lineage>
</organism>
<reference key="1">
    <citation type="journal article" date="2012" name="J. Proteome Res.">
        <title>Constrained de novo sequencing of conotoxins.</title>
        <authorList>
            <person name="Bhatia S."/>
            <person name="Kil Y.J."/>
            <person name="Ueberheide B."/>
            <person name="Chait B.T."/>
            <person name="Tayo L."/>
            <person name="Cruz L."/>
            <person name="Lu B."/>
            <person name="Yates J.R. III"/>
            <person name="Bern M."/>
        </authorList>
    </citation>
    <scope>PROTEIN SEQUENCE</scope>
    <scope>IDENTIFICATION BY MASS SPECTROMETRY</scope>
    <scope>SUBCELLULAR LOCATION</scope>
    <scope>AMIDATION AT THR-15</scope>
    <source>
        <tissue>Venom</tissue>
    </source>
</reference>
<dbReference type="GO" id="GO:0005576">
    <property type="term" value="C:extracellular region"/>
    <property type="evidence" value="ECO:0007669"/>
    <property type="project" value="UniProtKB-SubCell"/>
</dbReference>
<dbReference type="GO" id="GO:0090729">
    <property type="term" value="F:toxin activity"/>
    <property type="evidence" value="ECO:0007669"/>
    <property type="project" value="UniProtKB-KW"/>
</dbReference>
<name>CT5E_CONTE</name>
<protein>
    <recommendedName>
        <fullName evidence="2">Conotoxin tx5e</fullName>
    </recommendedName>
    <alternativeName>
        <fullName evidence="2">Tx5.5</fullName>
    </alternativeName>
</protein>
<keyword id="KW-0027">Amidation</keyword>
<keyword id="KW-0903">Direct protein sequencing</keyword>
<keyword id="KW-1015">Disulfide bond</keyword>
<keyword id="KW-0964">Secreted</keyword>
<keyword id="KW-0800">Toxin</keyword>
<proteinExistence type="evidence at protein level"/>
<feature type="peptide" id="PRO_0000445053" description="Conotoxin tx5e" evidence="1">
    <location>
        <begin position="1"/>
        <end position="15"/>
    </location>
</feature>
<feature type="modified residue" description="Threonine amide" evidence="1">
    <location>
        <position position="15"/>
    </location>
</feature>
<feature type="unsure residue" description="I or L" evidence="3">
    <location>
        <position position="2"/>
    </location>
</feature>
<feature type="unsure residue" description="I or L" evidence="3">
    <location>
        <position position="4"/>
    </location>
</feature>
<feature type="unsure residue" description="I or L" evidence="3">
    <location>
        <position position="5"/>
    </location>
</feature>
<sequence length="15" mass="1705">NIQIICCKHTPKCCT</sequence>
<accession>P0DPL7</accession>